<name>NANK_VIBCM</name>
<accession>C3LNA1</accession>
<evidence type="ECO:0000255" key="1">
    <source>
        <dbReference type="HAMAP-Rule" id="MF_01234"/>
    </source>
</evidence>
<comment type="function">
    <text evidence="1">Catalyzes the phosphorylation of N-acetylmannosamine (ManNAc) to ManNAc-6-P.</text>
</comment>
<comment type="catalytic activity">
    <reaction evidence="1">
        <text>an N-acyl-D-mannosamine + ATP = an N-acyl-D-mannosamine 6-phosphate + ADP + H(+)</text>
        <dbReference type="Rhea" id="RHEA:23832"/>
        <dbReference type="ChEBI" id="CHEBI:15378"/>
        <dbReference type="ChEBI" id="CHEBI:16062"/>
        <dbReference type="ChEBI" id="CHEBI:30616"/>
        <dbReference type="ChEBI" id="CHEBI:57666"/>
        <dbReference type="ChEBI" id="CHEBI:456216"/>
        <dbReference type="EC" id="2.7.1.60"/>
    </reaction>
</comment>
<comment type="pathway">
    <text evidence="1">Amino-sugar metabolism; N-acetylneuraminate degradation; D-fructose 6-phosphate from N-acetylneuraminate: step 2/5.</text>
</comment>
<comment type="subunit">
    <text evidence="1">Homodimer.</text>
</comment>
<comment type="similarity">
    <text evidence="1">Belongs to the ROK (NagC/XylR) family. NanK subfamily.</text>
</comment>
<reference key="1">
    <citation type="journal article" date="2008" name="PLoS ONE">
        <title>A recalibrated molecular clock and independent origins for the cholera pandemic clones.</title>
        <authorList>
            <person name="Feng L."/>
            <person name="Reeves P.R."/>
            <person name="Lan R."/>
            <person name="Ren Y."/>
            <person name="Gao C."/>
            <person name="Zhou Z."/>
            <person name="Ren Y."/>
            <person name="Cheng J."/>
            <person name="Wang W."/>
            <person name="Wang J."/>
            <person name="Qian W."/>
            <person name="Li D."/>
            <person name="Wang L."/>
        </authorList>
    </citation>
    <scope>NUCLEOTIDE SEQUENCE [LARGE SCALE GENOMIC DNA]</scope>
    <source>
        <strain>M66-2</strain>
    </source>
</reference>
<sequence>MRTLAIDIGGTKIALAIVEEGTIIQRYQIATPVVQDVTKFVQAILEKVTEWLPSIDYVGVSTTGYVTPEGITSINPETLNFPVPFPLAQTLEQLTNKPVSILNDAQAAAWFEFVQLKNPSLNMAFITVSTGVGGGIIIDGKLHKGNSGLAGHIGHMSVAIEGPLCGCGQRGCVESMASGNAIQKESEATFTETMSNVELFKQAAFNPKAEAIINRSVQAVATLCCNLKACLDLDIIVLGGGIGLAEGYLERLNKAIQSRPSVFHIPVTPAHGDYDACLLGAAFQFKE</sequence>
<organism>
    <name type="scientific">Vibrio cholerae serotype O1 (strain M66-2)</name>
    <dbReference type="NCBI Taxonomy" id="579112"/>
    <lineage>
        <taxon>Bacteria</taxon>
        <taxon>Pseudomonadati</taxon>
        <taxon>Pseudomonadota</taxon>
        <taxon>Gammaproteobacteria</taxon>
        <taxon>Vibrionales</taxon>
        <taxon>Vibrionaceae</taxon>
        <taxon>Vibrio</taxon>
    </lineage>
</organism>
<gene>
    <name evidence="1" type="primary">nanK</name>
    <name type="ordered locus">VCM66_1720</name>
</gene>
<protein>
    <recommendedName>
        <fullName evidence="1">N-acetylmannosamine kinase</fullName>
        <ecNumber evidence="1">2.7.1.60</ecNumber>
    </recommendedName>
    <alternativeName>
        <fullName evidence="1">ManNAc kinase</fullName>
    </alternativeName>
    <alternativeName>
        <fullName evidence="1">N-acetyl-D-mannosamine kinase</fullName>
    </alternativeName>
</protein>
<feature type="chain" id="PRO_1000164990" description="N-acetylmannosamine kinase">
    <location>
        <begin position="1"/>
        <end position="287"/>
    </location>
</feature>
<feature type="binding site" evidence="1">
    <location>
        <begin position="5"/>
        <end position="12"/>
    </location>
    <ligand>
        <name>ATP</name>
        <dbReference type="ChEBI" id="CHEBI:30616"/>
    </ligand>
</feature>
<feature type="binding site" evidence="1">
    <location>
        <begin position="131"/>
        <end position="138"/>
    </location>
    <ligand>
        <name>ATP</name>
        <dbReference type="ChEBI" id="CHEBI:30616"/>
    </ligand>
</feature>
<feature type="binding site" evidence="1">
    <location>
        <position position="155"/>
    </location>
    <ligand>
        <name>Zn(2+)</name>
        <dbReference type="ChEBI" id="CHEBI:29105"/>
    </ligand>
</feature>
<feature type="binding site" evidence="1">
    <location>
        <position position="165"/>
    </location>
    <ligand>
        <name>Zn(2+)</name>
        <dbReference type="ChEBI" id="CHEBI:29105"/>
    </ligand>
</feature>
<feature type="binding site" evidence="1">
    <location>
        <position position="167"/>
    </location>
    <ligand>
        <name>Zn(2+)</name>
        <dbReference type="ChEBI" id="CHEBI:29105"/>
    </ligand>
</feature>
<feature type="binding site" evidence="1">
    <location>
        <position position="172"/>
    </location>
    <ligand>
        <name>Zn(2+)</name>
        <dbReference type="ChEBI" id="CHEBI:29105"/>
    </ligand>
</feature>
<proteinExistence type="inferred from homology"/>
<dbReference type="EC" id="2.7.1.60" evidence="1"/>
<dbReference type="EMBL" id="CP001233">
    <property type="protein sequence ID" value="ACP06027.1"/>
    <property type="molecule type" value="Genomic_DNA"/>
</dbReference>
<dbReference type="RefSeq" id="WP_001259414.1">
    <property type="nucleotide sequence ID" value="NC_012578.1"/>
</dbReference>
<dbReference type="SMR" id="C3LNA1"/>
<dbReference type="KEGG" id="vcm:VCM66_1720"/>
<dbReference type="HOGENOM" id="CLU_036604_0_4_6"/>
<dbReference type="UniPathway" id="UPA00629">
    <property type="reaction ID" value="UER00681"/>
</dbReference>
<dbReference type="Proteomes" id="UP000001217">
    <property type="component" value="Chromosome I"/>
</dbReference>
<dbReference type="GO" id="GO:0005524">
    <property type="term" value="F:ATP binding"/>
    <property type="evidence" value="ECO:0007669"/>
    <property type="project" value="UniProtKB-UniRule"/>
</dbReference>
<dbReference type="GO" id="GO:0009384">
    <property type="term" value="F:N-acylmannosamine kinase activity"/>
    <property type="evidence" value="ECO:0007669"/>
    <property type="project" value="UniProtKB-UniRule"/>
</dbReference>
<dbReference type="GO" id="GO:0008270">
    <property type="term" value="F:zinc ion binding"/>
    <property type="evidence" value="ECO:0007669"/>
    <property type="project" value="UniProtKB-UniRule"/>
</dbReference>
<dbReference type="GO" id="GO:0019262">
    <property type="term" value="P:N-acetylneuraminate catabolic process"/>
    <property type="evidence" value="ECO:0007669"/>
    <property type="project" value="UniProtKB-UniRule"/>
</dbReference>
<dbReference type="Gene3D" id="3.30.420.40">
    <property type="match status" value="2"/>
</dbReference>
<dbReference type="HAMAP" id="MF_01234">
    <property type="entry name" value="ManNAc_kinase"/>
    <property type="match status" value="1"/>
</dbReference>
<dbReference type="InterPro" id="IPR043129">
    <property type="entry name" value="ATPase_NBD"/>
</dbReference>
<dbReference type="InterPro" id="IPR023945">
    <property type="entry name" value="ManNAc_kinase_bac"/>
</dbReference>
<dbReference type="InterPro" id="IPR000600">
    <property type="entry name" value="ROK"/>
</dbReference>
<dbReference type="InterPro" id="IPR049874">
    <property type="entry name" value="ROK_cs"/>
</dbReference>
<dbReference type="NCBIfam" id="NF003461">
    <property type="entry name" value="PRK05082.1"/>
    <property type="match status" value="1"/>
</dbReference>
<dbReference type="PANTHER" id="PTHR18964:SF169">
    <property type="entry name" value="N-ACETYLMANNOSAMINE KINASE"/>
    <property type="match status" value="1"/>
</dbReference>
<dbReference type="PANTHER" id="PTHR18964">
    <property type="entry name" value="ROK (REPRESSOR, ORF, KINASE) FAMILY"/>
    <property type="match status" value="1"/>
</dbReference>
<dbReference type="Pfam" id="PF00480">
    <property type="entry name" value="ROK"/>
    <property type="match status" value="1"/>
</dbReference>
<dbReference type="SUPFAM" id="SSF53067">
    <property type="entry name" value="Actin-like ATPase domain"/>
    <property type="match status" value="1"/>
</dbReference>
<dbReference type="PROSITE" id="PS01125">
    <property type="entry name" value="ROK"/>
    <property type="match status" value="1"/>
</dbReference>
<keyword id="KW-0067">ATP-binding</keyword>
<keyword id="KW-0119">Carbohydrate metabolism</keyword>
<keyword id="KW-0418">Kinase</keyword>
<keyword id="KW-0479">Metal-binding</keyword>
<keyword id="KW-0547">Nucleotide-binding</keyword>
<keyword id="KW-0808">Transferase</keyword>
<keyword id="KW-0862">Zinc</keyword>